<name>MNTH_YERPB</name>
<protein>
    <recommendedName>
        <fullName evidence="1">Divalent metal cation transporter MntH</fullName>
    </recommendedName>
</protein>
<dbReference type="EMBL" id="CP001048">
    <property type="protein sequence ID" value="ACC89762.1"/>
    <property type="molecule type" value="Genomic_DNA"/>
</dbReference>
<dbReference type="RefSeq" id="WP_002211621.1">
    <property type="nucleotide sequence ID" value="NZ_CP009780.1"/>
</dbReference>
<dbReference type="SMR" id="B2K911"/>
<dbReference type="KEGG" id="ypb:YPTS_2804"/>
<dbReference type="PATRIC" id="fig|502801.10.peg.2231"/>
<dbReference type="GO" id="GO:0005886">
    <property type="term" value="C:plasma membrane"/>
    <property type="evidence" value="ECO:0007669"/>
    <property type="project" value="UniProtKB-SubCell"/>
</dbReference>
<dbReference type="GO" id="GO:0015086">
    <property type="term" value="F:cadmium ion transmembrane transporter activity"/>
    <property type="evidence" value="ECO:0007669"/>
    <property type="project" value="TreeGrafter"/>
</dbReference>
<dbReference type="GO" id="GO:0005384">
    <property type="term" value="F:manganese ion transmembrane transporter activity"/>
    <property type="evidence" value="ECO:0007669"/>
    <property type="project" value="TreeGrafter"/>
</dbReference>
<dbReference type="GO" id="GO:0046872">
    <property type="term" value="F:metal ion binding"/>
    <property type="evidence" value="ECO:0007669"/>
    <property type="project" value="UniProtKB-UniRule"/>
</dbReference>
<dbReference type="GO" id="GO:0015293">
    <property type="term" value="F:symporter activity"/>
    <property type="evidence" value="ECO:0007669"/>
    <property type="project" value="UniProtKB-UniRule"/>
</dbReference>
<dbReference type="GO" id="GO:0034755">
    <property type="term" value="P:iron ion transmembrane transport"/>
    <property type="evidence" value="ECO:0007669"/>
    <property type="project" value="TreeGrafter"/>
</dbReference>
<dbReference type="HAMAP" id="MF_00221">
    <property type="entry name" value="NRAMP"/>
    <property type="match status" value="1"/>
</dbReference>
<dbReference type="InterPro" id="IPR001046">
    <property type="entry name" value="NRAMP_fam"/>
</dbReference>
<dbReference type="NCBIfam" id="TIGR01197">
    <property type="entry name" value="nramp"/>
    <property type="match status" value="1"/>
</dbReference>
<dbReference type="NCBIfam" id="NF037982">
    <property type="entry name" value="Nramp_1"/>
    <property type="match status" value="1"/>
</dbReference>
<dbReference type="NCBIfam" id="NF001923">
    <property type="entry name" value="PRK00701.1"/>
    <property type="match status" value="1"/>
</dbReference>
<dbReference type="PANTHER" id="PTHR11706:SF33">
    <property type="entry name" value="NATURAL RESISTANCE-ASSOCIATED MACROPHAGE PROTEIN 2"/>
    <property type="match status" value="1"/>
</dbReference>
<dbReference type="PANTHER" id="PTHR11706">
    <property type="entry name" value="SOLUTE CARRIER PROTEIN FAMILY 11 MEMBER"/>
    <property type="match status" value="1"/>
</dbReference>
<dbReference type="Pfam" id="PF01566">
    <property type="entry name" value="Nramp"/>
    <property type="match status" value="1"/>
</dbReference>
<dbReference type="PRINTS" id="PR00447">
    <property type="entry name" value="NATRESASSCMP"/>
</dbReference>
<feature type="chain" id="PRO_1000100093" description="Divalent metal cation transporter MntH">
    <location>
        <begin position="1"/>
        <end position="409"/>
    </location>
</feature>
<feature type="transmembrane region" description="Helical" evidence="1">
    <location>
        <begin position="19"/>
        <end position="39"/>
    </location>
</feature>
<feature type="transmembrane region" description="Helical" evidence="1">
    <location>
        <begin position="46"/>
        <end position="66"/>
    </location>
</feature>
<feature type="transmembrane region" description="Helical" evidence="1">
    <location>
        <begin position="98"/>
        <end position="118"/>
    </location>
</feature>
<feature type="transmembrane region" description="Helical" evidence="1">
    <location>
        <begin position="122"/>
        <end position="142"/>
    </location>
</feature>
<feature type="transmembrane region" description="Helical" evidence="1">
    <location>
        <begin position="155"/>
        <end position="175"/>
    </location>
</feature>
<feature type="transmembrane region" description="Helical" evidence="1">
    <location>
        <begin position="196"/>
        <end position="216"/>
    </location>
</feature>
<feature type="transmembrane region" description="Helical" evidence="1">
    <location>
        <begin position="241"/>
        <end position="261"/>
    </location>
</feature>
<feature type="transmembrane region" description="Helical" evidence="1">
    <location>
        <begin position="290"/>
        <end position="310"/>
    </location>
</feature>
<feature type="transmembrane region" description="Helical" evidence="1">
    <location>
        <begin position="320"/>
        <end position="340"/>
    </location>
</feature>
<feature type="transmembrane region" description="Helical" evidence="1">
    <location>
        <begin position="348"/>
        <end position="368"/>
    </location>
</feature>
<feature type="transmembrane region" description="Helical" evidence="1">
    <location>
        <begin position="388"/>
        <end position="408"/>
    </location>
</feature>
<reference key="1">
    <citation type="submission" date="2008-04" db="EMBL/GenBank/DDBJ databases">
        <title>Complete sequence of Yersinia pseudotuberculosis PB1/+.</title>
        <authorList>
            <person name="Copeland A."/>
            <person name="Lucas S."/>
            <person name="Lapidus A."/>
            <person name="Glavina del Rio T."/>
            <person name="Dalin E."/>
            <person name="Tice H."/>
            <person name="Bruce D."/>
            <person name="Goodwin L."/>
            <person name="Pitluck S."/>
            <person name="Munk A.C."/>
            <person name="Brettin T."/>
            <person name="Detter J.C."/>
            <person name="Han C."/>
            <person name="Tapia R."/>
            <person name="Schmutz J."/>
            <person name="Larimer F."/>
            <person name="Land M."/>
            <person name="Hauser L."/>
            <person name="Challacombe J.F."/>
            <person name="Green L."/>
            <person name="Lindler L.E."/>
            <person name="Nikolich M.P."/>
            <person name="Richardson P."/>
        </authorList>
    </citation>
    <scope>NUCLEOTIDE SEQUENCE [LARGE SCALE GENOMIC DNA]</scope>
    <source>
        <strain>PB1/+</strain>
    </source>
</reference>
<proteinExistence type="inferred from homology"/>
<sequence length="409" mass="43742">MLNGRAVDTSRRPLRKIKLSLMGPAFIAAIAYIDPGNFATNIQAGATFGYTLLWVVVWANVMAMLVQLLSAKLGIATGKNLAEHIRDRFPRPVVWAYWVQAEIIVMATDLAEFIGAAIGFKLLFGVTLLQGAVLTGIATFLILMLQNRGQKPLELVIGGLLLFVAAAYIVELIFSQPDIAALGRGMLIPNLPDGNAVFLAAGVLGATIMPHVIYLHSALTQTGGEESKTERYASTKFDVAIAMTIAGFVNLAMMATAAAAFHFNGYENIAEIEEAYITLQPLLGNAAATVFGLSLIAAGLSSTVVGTLAGQVVMQGFVRFYIPMWVRRIVTMLPSFIVILAGMDATQILVMSQVLLSFGIALALVPLLVFTGNKELMGELVDTKTTQILGKLVVLIVVGLNAYLLISLL</sequence>
<gene>
    <name evidence="1" type="primary">mntH</name>
    <name type="ordered locus">YPTS_2804</name>
</gene>
<keyword id="KW-0997">Cell inner membrane</keyword>
<keyword id="KW-1003">Cell membrane</keyword>
<keyword id="KW-0406">Ion transport</keyword>
<keyword id="KW-0472">Membrane</keyword>
<keyword id="KW-0769">Symport</keyword>
<keyword id="KW-0812">Transmembrane</keyword>
<keyword id="KW-1133">Transmembrane helix</keyword>
<keyword id="KW-0813">Transport</keyword>
<accession>B2K911</accession>
<organism>
    <name type="scientific">Yersinia pseudotuberculosis serotype IB (strain PB1/+)</name>
    <dbReference type="NCBI Taxonomy" id="502801"/>
    <lineage>
        <taxon>Bacteria</taxon>
        <taxon>Pseudomonadati</taxon>
        <taxon>Pseudomonadota</taxon>
        <taxon>Gammaproteobacteria</taxon>
        <taxon>Enterobacterales</taxon>
        <taxon>Yersiniaceae</taxon>
        <taxon>Yersinia</taxon>
    </lineage>
</organism>
<evidence type="ECO:0000255" key="1">
    <source>
        <dbReference type="HAMAP-Rule" id="MF_00221"/>
    </source>
</evidence>
<comment type="function">
    <text evidence="1">H(+)-stimulated, divalent metal cation uptake system.</text>
</comment>
<comment type="subcellular location">
    <subcellularLocation>
        <location evidence="1">Cell inner membrane</location>
        <topology evidence="1">Multi-pass membrane protein</topology>
    </subcellularLocation>
</comment>
<comment type="similarity">
    <text evidence="1">Belongs to the NRAMP family.</text>
</comment>